<gene>
    <name type="primary">SPT8</name>
    <name type="ordered locus">YLR055C</name>
    <name type="ORF">L2144</name>
</gene>
<evidence type="ECO:0000256" key="1">
    <source>
        <dbReference type="SAM" id="MobiDB-lite"/>
    </source>
</evidence>
<evidence type="ECO:0000269" key="2">
    <source>
    </source>
</evidence>
<evidence type="ECO:0000269" key="3">
    <source>
    </source>
</evidence>
<evidence type="ECO:0000269" key="4">
    <source>
    </source>
</evidence>
<evidence type="ECO:0000269" key="5">
    <source>
    </source>
</evidence>
<evidence type="ECO:0000269" key="6">
    <source>
    </source>
</evidence>
<evidence type="ECO:0000269" key="7">
    <source>
    </source>
</evidence>
<evidence type="ECO:0000269" key="8">
    <source>
    </source>
</evidence>
<evidence type="ECO:0000269" key="9">
    <source>
    </source>
</evidence>
<evidence type="ECO:0000269" key="10">
    <source>
    </source>
</evidence>
<evidence type="ECO:0000269" key="11">
    <source>
    </source>
</evidence>
<evidence type="ECO:0000269" key="12">
    <source>
    </source>
</evidence>
<evidence type="ECO:0000305" key="13"/>
<evidence type="ECO:0007744" key="14">
    <source>
    </source>
</evidence>
<evidence type="ECO:0007744" key="15">
    <source>
    </source>
</evidence>
<dbReference type="EMBL" id="M94955">
    <property type="protein sequence ID" value="AAA53585.1"/>
    <property type="molecule type" value="Genomic_DNA"/>
</dbReference>
<dbReference type="EMBL" id="X94607">
    <property type="protein sequence ID" value="CAA64302.1"/>
    <property type="molecule type" value="Genomic_DNA"/>
</dbReference>
<dbReference type="EMBL" id="Z73227">
    <property type="protein sequence ID" value="CAA97585.1"/>
    <property type="molecule type" value="Genomic_DNA"/>
</dbReference>
<dbReference type="EMBL" id="BK006945">
    <property type="protein sequence ID" value="DAA09373.1"/>
    <property type="molecule type" value="Genomic_DNA"/>
</dbReference>
<dbReference type="PIR" id="S47898">
    <property type="entry name" value="S47898"/>
</dbReference>
<dbReference type="RefSeq" id="NP_013156.1">
    <property type="nucleotide sequence ID" value="NM_001181942.1"/>
</dbReference>
<dbReference type="SMR" id="P38915"/>
<dbReference type="BioGRID" id="31330">
    <property type="interactions" value="430"/>
</dbReference>
<dbReference type="ComplexPortal" id="CPX-656">
    <property type="entry name" value="SAGA complex"/>
</dbReference>
<dbReference type="DIP" id="DIP-5805N"/>
<dbReference type="FunCoup" id="P38915">
    <property type="interactions" value="539"/>
</dbReference>
<dbReference type="IntAct" id="P38915">
    <property type="interactions" value="187"/>
</dbReference>
<dbReference type="MINT" id="P38915"/>
<dbReference type="STRING" id="4932.YLR055C"/>
<dbReference type="GlyGen" id="P38915">
    <property type="glycosylation" value="1 site"/>
</dbReference>
<dbReference type="iPTMnet" id="P38915"/>
<dbReference type="PaxDb" id="4932-YLR055C"/>
<dbReference type="PeptideAtlas" id="P38915"/>
<dbReference type="EnsemblFungi" id="YLR055C_mRNA">
    <property type="protein sequence ID" value="YLR055C"/>
    <property type="gene ID" value="YLR055C"/>
</dbReference>
<dbReference type="GeneID" id="850744"/>
<dbReference type="KEGG" id="sce:YLR055C"/>
<dbReference type="AGR" id="SGD:S000004045"/>
<dbReference type="SGD" id="S000004045">
    <property type="gene designation" value="SPT8"/>
</dbReference>
<dbReference type="VEuPathDB" id="FungiDB:YLR055C"/>
<dbReference type="eggNOG" id="ENOG502QS8F">
    <property type="taxonomic scope" value="Eukaryota"/>
</dbReference>
<dbReference type="HOGENOM" id="CLU_010934_2_1_1"/>
<dbReference type="InParanoid" id="P38915"/>
<dbReference type="OMA" id="WDRRQPN"/>
<dbReference type="OrthoDB" id="10260946at2759"/>
<dbReference type="BioCyc" id="YEAST:G3O-32211-MONOMER"/>
<dbReference type="BioGRID-ORCS" id="850744">
    <property type="hits" value="4 hits in 10 CRISPR screens"/>
</dbReference>
<dbReference type="PRO" id="PR:P38915"/>
<dbReference type="Proteomes" id="UP000002311">
    <property type="component" value="Chromosome XII"/>
</dbReference>
<dbReference type="RNAct" id="P38915">
    <property type="molecule type" value="protein"/>
</dbReference>
<dbReference type="GO" id="GO:0005634">
    <property type="term" value="C:nucleus"/>
    <property type="evidence" value="ECO:0007005"/>
    <property type="project" value="SGD"/>
</dbReference>
<dbReference type="GO" id="GO:0070545">
    <property type="term" value="C:PeBoW complex"/>
    <property type="evidence" value="ECO:0000318"/>
    <property type="project" value="GO_Central"/>
</dbReference>
<dbReference type="GO" id="GO:0030687">
    <property type="term" value="C:preribosome, large subunit precursor"/>
    <property type="evidence" value="ECO:0000318"/>
    <property type="project" value="GO_Central"/>
</dbReference>
<dbReference type="GO" id="GO:0000124">
    <property type="term" value="C:SAGA complex"/>
    <property type="evidence" value="ECO:0000314"/>
    <property type="project" value="SGD"/>
</dbReference>
<dbReference type="GO" id="GO:0017025">
    <property type="term" value="F:TBP-class protein binding"/>
    <property type="evidence" value="ECO:0000314"/>
    <property type="project" value="SGD"/>
</dbReference>
<dbReference type="GO" id="GO:0003712">
    <property type="term" value="F:transcription coregulator activity"/>
    <property type="evidence" value="ECO:0000315"/>
    <property type="project" value="SGD"/>
</dbReference>
<dbReference type="GO" id="GO:0006325">
    <property type="term" value="P:chromatin organization"/>
    <property type="evidence" value="ECO:0000314"/>
    <property type="project" value="SGD"/>
</dbReference>
<dbReference type="GO" id="GO:0000122">
    <property type="term" value="P:negative regulation of transcription by RNA polymerase II"/>
    <property type="evidence" value="ECO:0000314"/>
    <property type="project" value="SGD"/>
</dbReference>
<dbReference type="GO" id="GO:0045944">
    <property type="term" value="P:positive regulation of transcription by RNA polymerase II"/>
    <property type="evidence" value="ECO:0000315"/>
    <property type="project" value="SGD"/>
</dbReference>
<dbReference type="GO" id="GO:0006357">
    <property type="term" value="P:regulation of transcription by RNA polymerase II"/>
    <property type="evidence" value="ECO:0000314"/>
    <property type="project" value="ComplexPortal"/>
</dbReference>
<dbReference type="GO" id="GO:0042273">
    <property type="term" value="P:ribosomal large subunit biogenesis"/>
    <property type="evidence" value="ECO:0000318"/>
    <property type="project" value="GO_Central"/>
</dbReference>
<dbReference type="FunFam" id="2.130.10.10:FF:000925">
    <property type="entry name" value="Transcription factor SPT8"/>
    <property type="match status" value="1"/>
</dbReference>
<dbReference type="Gene3D" id="2.130.10.10">
    <property type="entry name" value="YVTN repeat-like/Quinoprotein amine dehydrogenase"/>
    <property type="match status" value="2"/>
</dbReference>
<dbReference type="InterPro" id="IPR051510">
    <property type="entry name" value="SKI8"/>
</dbReference>
<dbReference type="InterPro" id="IPR015943">
    <property type="entry name" value="WD40/YVTN_repeat-like_dom_sf"/>
</dbReference>
<dbReference type="InterPro" id="IPR036322">
    <property type="entry name" value="WD40_repeat_dom_sf"/>
</dbReference>
<dbReference type="InterPro" id="IPR001680">
    <property type="entry name" value="WD40_rpt"/>
</dbReference>
<dbReference type="PANTHER" id="PTHR44090:SF1">
    <property type="entry name" value="SUPERKILLER COMPLEX PROTEIN 8"/>
    <property type="match status" value="1"/>
</dbReference>
<dbReference type="PANTHER" id="PTHR44090">
    <property type="entry name" value="WD REPEAT-CONTAINING PROTEIN 61"/>
    <property type="match status" value="1"/>
</dbReference>
<dbReference type="Pfam" id="PF23798">
    <property type="entry name" value="Beta-prop_SPT8"/>
    <property type="match status" value="1"/>
</dbReference>
<dbReference type="SMART" id="SM00320">
    <property type="entry name" value="WD40"/>
    <property type="match status" value="4"/>
</dbReference>
<dbReference type="SUPFAM" id="SSF50978">
    <property type="entry name" value="WD40 repeat-like"/>
    <property type="match status" value="1"/>
</dbReference>
<dbReference type="PROSITE" id="PS50082">
    <property type="entry name" value="WD_REPEATS_2"/>
    <property type="match status" value="1"/>
</dbReference>
<dbReference type="PROSITE" id="PS50294">
    <property type="entry name" value="WD_REPEATS_REGION"/>
    <property type="match status" value="1"/>
</dbReference>
<feature type="chain" id="PRO_0000051226" description="SAGA complex subunit SPT8">
    <location>
        <begin position="1"/>
        <end position="602"/>
    </location>
</feature>
<feature type="repeat" description="WD 1">
    <location>
        <begin position="173"/>
        <end position="212"/>
    </location>
</feature>
<feature type="repeat" description="WD 2">
    <location>
        <begin position="305"/>
        <end position="346"/>
    </location>
</feature>
<feature type="repeat" description="WD 3">
    <location>
        <begin position="415"/>
        <end position="454"/>
    </location>
</feature>
<feature type="repeat" description="WD 4">
    <location>
        <begin position="506"/>
        <end position="544"/>
    </location>
</feature>
<feature type="repeat" description="WD 5">
    <location>
        <begin position="560"/>
        <end position="600"/>
    </location>
</feature>
<feature type="region of interest" description="Disordered" evidence="1">
    <location>
        <begin position="1"/>
        <end position="141"/>
    </location>
</feature>
<feature type="region of interest" description="Disordered" evidence="1">
    <location>
        <begin position="366"/>
        <end position="418"/>
    </location>
</feature>
<feature type="compositionally biased region" description="Acidic residues" evidence="1">
    <location>
        <begin position="14"/>
        <end position="23"/>
    </location>
</feature>
<feature type="compositionally biased region" description="Acidic residues" evidence="1">
    <location>
        <begin position="36"/>
        <end position="75"/>
    </location>
</feature>
<feature type="compositionally biased region" description="Acidic residues" evidence="1">
    <location>
        <begin position="378"/>
        <end position="395"/>
    </location>
</feature>
<feature type="modified residue" description="Phosphothreonine" evidence="14">
    <location>
        <position position="85"/>
    </location>
</feature>
<feature type="modified residue" description="Phosphoserine" evidence="15">
    <location>
        <position position="108"/>
    </location>
</feature>
<feature type="modified residue" description="Phosphoserine" evidence="15">
    <location>
        <position position="123"/>
    </location>
</feature>
<feature type="modified residue" description="Phosphoserine" evidence="15">
    <location>
        <position position="131"/>
    </location>
</feature>
<feature type="modified residue" description="Phosphoserine" evidence="15">
    <location>
        <position position="451"/>
    </location>
</feature>
<keyword id="KW-0539">Nucleus</keyword>
<keyword id="KW-0597">Phosphoprotein</keyword>
<keyword id="KW-1185">Reference proteome</keyword>
<keyword id="KW-0677">Repeat</keyword>
<keyword id="KW-0804">Transcription</keyword>
<keyword id="KW-0805">Transcription regulation</keyword>
<keyword id="KW-0853">WD repeat</keyword>
<protein>
    <recommendedName>
        <fullName>SAGA complex subunit SPT8</fullName>
    </recommendedName>
    <alternativeName>
        <fullName>Suppressor of Ty protein 8</fullName>
    </alternativeName>
    <alternativeName>
        <fullName>Transcription factor SPT8</fullName>
    </alternativeName>
</protein>
<accession>P38915</accession>
<accession>D6VY57</accession>
<reference key="1">
    <citation type="journal article" date="1994" name="Genetics">
        <title>The Saccharomyces cerevisiae SPT8 gene encodes a very acidic protein that is functionally related to SPT3 and TATA-binding protein.</title>
        <authorList>
            <person name="Eisenmann D.M."/>
            <person name="Chapon C."/>
            <person name="Roberts S.M."/>
            <person name="Dollard C."/>
            <person name="Winston F."/>
        </authorList>
    </citation>
    <scope>NUCLEOTIDE SEQUENCE [GENOMIC DNA]</scope>
    <source>
        <strain>ATCC 204508 / S288c</strain>
    </source>
</reference>
<reference key="2">
    <citation type="journal article" date="1997" name="Nature">
        <title>The nucleotide sequence of Saccharomyces cerevisiae chromosome XII.</title>
        <authorList>
            <person name="Johnston M."/>
            <person name="Hillier L.W."/>
            <person name="Riles L."/>
            <person name="Albermann K."/>
            <person name="Andre B."/>
            <person name="Ansorge W."/>
            <person name="Benes V."/>
            <person name="Brueckner M."/>
            <person name="Delius H."/>
            <person name="Dubois E."/>
            <person name="Duesterhoeft A."/>
            <person name="Entian K.-D."/>
            <person name="Floeth M."/>
            <person name="Goffeau A."/>
            <person name="Hebling U."/>
            <person name="Heumann K."/>
            <person name="Heuss-Neitzel D."/>
            <person name="Hilbert H."/>
            <person name="Hilger F."/>
            <person name="Kleine K."/>
            <person name="Koetter P."/>
            <person name="Louis E.J."/>
            <person name="Messenguy F."/>
            <person name="Mewes H.-W."/>
            <person name="Miosga T."/>
            <person name="Moestl D."/>
            <person name="Mueller-Auer S."/>
            <person name="Nentwich U."/>
            <person name="Obermaier B."/>
            <person name="Piravandi E."/>
            <person name="Pohl T.M."/>
            <person name="Portetelle D."/>
            <person name="Purnelle B."/>
            <person name="Rechmann S."/>
            <person name="Rieger M."/>
            <person name="Rinke M."/>
            <person name="Rose M."/>
            <person name="Scharfe M."/>
            <person name="Scherens B."/>
            <person name="Scholler P."/>
            <person name="Schwager C."/>
            <person name="Schwarz S."/>
            <person name="Underwood A.P."/>
            <person name="Urrestarazu L.A."/>
            <person name="Vandenbol M."/>
            <person name="Verhasselt P."/>
            <person name="Vierendeels F."/>
            <person name="Voet M."/>
            <person name="Volckaert G."/>
            <person name="Voss H."/>
            <person name="Wambutt R."/>
            <person name="Wedler E."/>
            <person name="Wedler H."/>
            <person name="Zimmermann F.K."/>
            <person name="Zollner A."/>
            <person name="Hani J."/>
            <person name="Hoheisel J.D."/>
        </authorList>
    </citation>
    <scope>NUCLEOTIDE SEQUENCE [LARGE SCALE GENOMIC DNA]</scope>
    <source>
        <strain>ATCC 204508 / S288c</strain>
    </source>
</reference>
<reference key="3">
    <citation type="journal article" date="2014" name="G3 (Bethesda)">
        <title>The reference genome sequence of Saccharomyces cerevisiae: Then and now.</title>
        <authorList>
            <person name="Engel S.R."/>
            <person name="Dietrich F.S."/>
            <person name="Fisk D.G."/>
            <person name="Binkley G."/>
            <person name="Balakrishnan R."/>
            <person name="Costanzo M.C."/>
            <person name="Dwight S.S."/>
            <person name="Hitz B.C."/>
            <person name="Karra K."/>
            <person name="Nash R.S."/>
            <person name="Weng S."/>
            <person name="Wong E.D."/>
            <person name="Lloyd P."/>
            <person name="Skrzypek M.S."/>
            <person name="Miyasato S.R."/>
            <person name="Simison M."/>
            <person name="Cherry J.M."/>
        </authorList>
    </citation>
    <scope>GENOME REANNOTATION</scope>
    <source>
        <strain>ATCC 204508 / S288c</strain>
    </source>
</reference>
<reference key="4">
    <citation type="journal article" date="1998" name="Cell">
        <title>A subset of TAF(II)s are integral components of the SAGA complex required for nucleosome acetylation and transcriptional stimulation.</title>
        <authorList>
            <person name="Grant P.A."/>
            <person name="Schieltz D."/>
            <person name="Pray-Grant M.G."/>
            <person name="Steger D.J."/>
            <person name="Reese J.C."/>
            <person name="Yates J.R. III"/>
            <person name="Workman J.L."/>
        </authorList>
    </citation>
    <scope>IDENTIFICATION IN THE SAGA COMPLEX</scope>
    <scope>IDENTIFICATION BY MASS SPECTROMETRY</scope>
</reference>
<reference key="5">
    <citation type="journal article" date="1999" name="Mol. Cell. Biol.">
        <title>Functional organization of the yeast SAGA complex: distinct components involved in structural integrity, nucleosome acetylation, and TATA-binding protein interaction.</title>
        <authorList>
            <person name="Sterner D.E."/>
            <person name="Grant P.A."/>
            <person name="Roberts S.M."/>
            <person name="Duggan L.J."/>
            <person name="Belotserkovskaya R."/>
            <person name="Pacella L.A."/>
            <person name="Winston F."/>
            <person name="Workman J.L."/>
            <person name="Berger S.L."/>
        </authorList>
    </citation>
    <scope>FUNCTION</scope>
</reference>
<reference key="6">
    <citation type="journal article" date="1999" name="J. Biol. Chem.">
        <title>Expanded lysine acetylation specificity of Gcn5 in native complexes.</title>
        <authorList>
            <person name="Grant P.A."/>
            <person name="Eberharter A."/>
            <person name="John S."/>
            <person name="Cook R.G."/>
            <person name="Turner B.M."/>
            <person name="Workman J.L."/>
        </authorList>
    </citation>
    <scope>FUNCTION IN HISTONE ACETYLATION AT THE SAGA COMPLEX</scope>
</reference>
<reference key="7">
    <citation type="journal article" date="2000" name="Mol. Cell. Biol.">
        <title>Inhibition of TATA-binding protein function by SAGA subunits Spt3 and Spt8 at Gcn4-activated promoters.</title>
        <authorList>
            <person name="Belotserkovskaya R."/>
            <person name="Sterner D.E."/>
            <person name="Deng M."/>
            <person name="Sayre M.H."/>
            <person name="Lieberman P.M."/>
            <person name="Berger S.L."/>
        </authorList>
    </citation>
    <scope>FUNCTION</scope>
</reference>
<reference key="8">
    <citation type="journal article" date="2000" name="Nature">
        <title>Redundant roles for the TFIID and SAGA complexes in global transcription.</title>
        <authorList>
            <person name="Lee T.I."/>
            <person name="Causton H.C."/>
            <person name="Holstege F.C."/>
            <person name="Shen W.C."/>
            <person name="Hannett N."/>
            <person name="Jennings E.G."/>
            <person name="Winston F."/>
            <person name="Green M.R."/>
            <person name="Young R.A."/>
        </authorList>
    </citation>
    <scope>FUNCTION</scope>
</reference>
<reference key="9">
    <citation type="journal article" date="2002" name="Genes Dev.">
        <title>Subcellular localization of the yeast proteome.</title>
        <authorList>
            <person name="Kumar A."/>
            <person name="Agarwal S."/>
            <person name="Heyman J.A."/>
            <person name="Matson S."/>
            <person name="Heidtman M."/>
            <person name="Piccirillo S."/>
            <person name="Umansky L."/>
            <person name="Drawid A."/>
            <person name="Jansen R."/>
            <person name="Liu Y."/>
            <person name="Cheung K.-H."/>
            <person name="Miller P."/>
            <person name="Gerstein M."/>
            <person name="Roeder G.S."/>
            <person name="Snyder M."/>
        </authorList>
    </citation>
    <scope>SUBCELLULAR LOCATION [LARGE SCALE ANALYSIS]</scope>
</reference>
<reference key="10">
    <citation type="journal article" date="2002" name="Mol. Cell. Biol.">
        <title>Differential requirement of SAGA components for recruitment of TATA-box-binding protein to promoters in vivo.</title>
        <authorList>
            <person name="Bhaumik S.R."/>
            <person name="Green M.R."/>
        </authorList>
    </citation>
    <scope>FUNCTION</scope>
</reference>
<reference key="11">
    <citation type="journal article" date="2003" name="Nature">
        <title>Global analysis of protein expression in yeast.</title>
        <authorList>
            <person name="Ghaemmaghami S."/>
            <person name="Huh W.-K."/>
            <person name="Bower K."/>
            <person name="Howson R.W."/>
            <person name="Belle A."/>
            <person name="Dephoure N."/>
            <person name="O'Shea E.K."/>
            <person name="Weissman J.S."/>
        </authorList>
    </citation>
    <scope>LEVEL OF PROTEIN EXPRESSION [LARGE SCALE ANALYSIS]</scope>
</reference>
<reference key="12">
    <citation type="journal article" date="2004" name="Genes Dev.">
        <title>Positive and negative functions of the SAGA complex mediated through interaction of Spt8 with TBP and the N-terminal domain of TFIIA.</title>
        <authorList>
            <person name="Warfield L."/>
            <person name="Ranish J.A."/>
            <person name="Hahn S."/>
        </authorList>
    </citation>
    <scope>FUNCTION</scope>
</reference>
<reference key="13">
    <citation type="journal article" date="2007" name="Proc. Natl. Acad. Sci. U.S.A.">
        <title>Analysis of phosphorylation sites on proteins from Saccharomyces cerevisiae by electron transfer dissociation (ETD) mass spectrometry.</title>
        <authorList>
            <person name="Chi A."/>
            <person name="Huttenhower C."/>
            <person name="Geer L.Y."/>
            <person name="Coon J.J."/>
            <person name="Syka J.E.P."/>
            <person name="Bai D.L."/>
            <person name="Shabanowitz J."/>
            <person name="Burke D.J."/>
            <person name="Troyanskaya O.G."/>
            <person name="Hunt D.F."/>
        </authorList>
    </citation>
    <scope>PHOSPHORYLATION [LARGE SCALE ANALYSIS] AT THR-85</scope>
    <scope>IDENTIFICATION BY MASS SPECTROMETRY [LARGE SCALE ANALYSIS]</scope>
</reference>
<reference key="14">
    <citation type="journal article" date="2008" name="Mol. Cell. Proteomics">
        <title>A multidimensional chromatography technology for in-depth phosphoproteome analysis.</title>
        <authorList>
            <person name="Albuquerque C.P."/>
            <person name="Smolka M.B."/>
            <person name="Payne S.H."/>
            <person name="Bafna V."/>
            <person name="Eng J."/>
            <person name="Zhou H."/>
        </authorList>
    </citation>
    <scope>PHOSPHORYLATION [LARGE SCALE ANALYSIS] AT SER-108; SER-123; SER-131 AND SER-451</scope>
    <scope>IDENTIFICATION BY MASS SPECTROMETRY [LARGE SCALE ANALYSIS]</scope>
</reference>
<reference key="15">
    <citation type="journal article" date="2014" name="EMBO J.">
        <title>Architecture of the Saccharomyces cerevisiae SAGA transcription coactivator complex.</title>
        <authorList>
            <person name="Han Y."/>
            <person name="Luo J."/>
            <person name="Ranish J."/>
            <person name="Hahn S."/>
        </authorList>
    </citation>
    <scope>SUBUNIT</scope>
</reference>
<reference key="16">
    <citation type="journal article" date="2017" name="Mol. Cell">
        <title>SAGA is a general cofactor for RNA polymerase II transcription.</title>
        <authorList>
            <person name="Baptista T."/>
            <person name="Gruenberg S."/>
            <person name="Minoungou N."/>
            <person name="Koster M.J.E."/>
            <person name="Timmers H.T.M."/>
            <person name="Hahn S."/>
            <person name="Devys D."/>
            <person name="Tora L."/>
        </authorList>
    </citation>
    <scope>FUNCTION</scope>
</reference>
<reference key="17">
    <citation type="journal article" date="2004" name="Mol. Cell">
        <title>Molecular architecture of the S. cerevisiae SAGA complex.</title>
        <authorList>
            <person name="Wu P.Y."/>
            <person name="Ruhlmann C."/>
            <person name="Winston F."/>
            <person name="Schultz P."/>
        </authorList>
    </citation>
    <scope>3D-STRUCTURE MODELING OF THE SAGA COMPLEX</scope>
</reference>
<name>SPT8_YEAST</name>
<proteinExistence type="evidence at protein level"/>
<organism>
    <name type="scientific">Saccharomyces cerevisiae (strain ATCC 204508 / S288c)</name>
    <name type="common">Baker's yeast</name>
    <dbReference type="NCBI Taxonomy" id="559292"/>
    <lineage>
        <taxon>Eukaryota</taxon>
        <taxon>Fungi</taxon>
        <taxon>Dikarya</taxon>
        <taxon>Ascomycota</taxon>
        <taxon>Saccharomycotina</taxon>
        <taxon>Saccharomycetes</taxon>
        <taxon>Saccharomycetales</taxon>
        <taxon>Saccharomycetaceae</taxon>
        <taxon>Saccharomyces</taxon>
    </lineage>
</organism>
<comment type="function">
    <text evidence="2 3 4 6 8 9 10 12">Component of the transcription coactivator SAGA complex. SAGA acts as a general cofactor required for essentially all RNA polymerase II transcription (PubMed:10864329, PubMed:25216679, PubMed:28918903). At the promoters, SAGA is required for transcription pre-initiation complex (PIC) recruitment. It influences RNA polymerase II transcriptional activity through different activities such as TBP interaction (via core/TAF module) and promoter selectivity, interaction with transcription activators (via Tra1/SPT module), and chromatin modification through histone acetylation (via HAT module) and deubiquitination (via DUB module) (PubMed:12370284, PubMed:9858534). SAGA preferentially acetylates histones H3 (to form H3K9ac, H3K14ac, H3K18ac and H3K23ac) and H2B and deubiquitinates histone H2B (PubMed:10026213). SAGA interacts with DNA via upstream activating sequences (UASs) (PubMed:28918903). During SAGA-mediated transcriptional inhibition, SPT3 and SPT8 prevent binding of TBP to the TATA box (PubMed:10611242, PubMed:15132995).</text>
</comment>
<comment type="subunit">
    <text evidence="9 11">Component of the 1.8 MDa SAGA (Spt-Ada-Gcn5 acetyltransferase) complex, which is composed of 19 subunits TRA1, SPT7, TAF5, NGG1/ADA3, SGF73, SPT20/ADA5, SPT8, TAF12, TAF6, HFI1/ADA1, UBP8, GCN5, ADA2, SPT3, SGF29, TAF10, TAF9, SGF11 and SUS1 (PubMed:9674426). The SAGA complex is composed of 4 modules, namely the HAT (histone acetyltransferase) module (GCN5, ADA2, NGG1/ADA3 and SGF29), the DUB (deubiquitinating) module (UBP8, SGF11, SGF73 and SUS1), the core or TAF (TBP-associated factor) module (TAF5, TAF6, TAF9, TAF10 and TAF12), and the Tra1 or SPT (Suppressor of Ty) module (TRA1, HFI1/ADA1, SPT3, SPT7, SPT8 and SPT20/ADA5). The Tra1/SPT module binds activators, the core module recruits TBP (TATA-binding protein), the HAT module contains the histone H3 acetyltransferase GCN5, and the DUB module comprises the histone H2B deubiquitinase UBP8 (PubMed:25216679).</text>
</comment>
<comment type="interaction">
    <interactant intactId="EBI-17964">
        <id>P38915</id>
    </interactant>
    <interactant intactId="EBI-19168">
        <id>P07273</id>
        <label>DST1</label>
    </interactant>
    <organismsDiffer>false</organismsDiffer>
    <experiments>2</experiments>
</comment>
<comment type="interaction">
    <interactant intactId="EBI-17964">
        <id>P38915</id>
    </interactant>
    <interactant intactId="EBI-8287">
        <id>Q12060</id>
        <label>HFI1</label>
    </interactant>
    <organismsDiffer>false</organismsDiffer>
    <experiments>15</experiments>
</comment>
<comment type="interaction">
    <interactant intactId="EBI-17964">
        <id>P38915</id>
    </interactant>
    <interactant intactId="EBI-2192">
        <id>P32494</id>
        <label>NGG1</label>
    </interactant>
    <organismsDiffer>false</organismsDiffer>
    <experiments>8</experiments>
</comment>
<comment type="interaction">
    <interactant intactId="EBI-17964">
        <id>P38915</id>
    </interactant>
    <interactant intactId="EBI-19129">
        <id>P13393</id>
        <label>SPT15</label>
    </interactant>
    <organismsDiffer>false</organismsDiffer>
    <experiments>3</experiments>
</comment>
<comment type="interaction">
    <interactant intactId="EBI-17964">
        <id>P38915</id>
    </interactant>
    <interactant intactId="EBI-17958">
        <id>P35177</id>
        <label>SPT7</label>
    </interactant>
    <organismsDiffer>false</organismsDiffer>
    <experiments>14</experiments>
</comment>
<comment type="subcellular location">
    <subcellularLocation>
        <location evidence="5">Nucleus</location>
    </subcellularLocation>
</comment>
<comment type="miscellaneous">
    <text evidence="7">Present with 8430 molecules/cell in log phase SD medium.</text>
</comment>
<comment type="similarity">
    <text evidence="13">Belongs to the WD repeat SPT8 family.</text>
</comment>
<sequence>MDEVDDILINNQVVDDEEDDEEMLSGLENDSKQDLEGNDDGGEDEEDDDDDDEDDDDDEDEREDDDEQEDDDGEDDAARMDKTATPTNEHQHDEQKAAAAGAGGAGDSGDAVTKIGSEDVKLSDVDGGVGSREASSSTHEASANGEVYEYYKHMLNAAQIADSYNIYPTAAIPIQTHVNALAVSRGLKYLFLGGSDGYIRKYDLLNTLEGKLSLTILQKHSLAESIQNAGILQSYWENEIPQKKSEMKLSANKTDYEPKVSPVHSLEVQSECLFILSGLQNGGITMQGVRYMEGSIAHYFKGRNGHTQIVNILRLNGQEDRFLSGSWDKRLLEWDLQTGDIVNEFKKSRSELSSLEMRPLYSSVDVSGNVNSGKENENADDDMDSLFGDEDEDEKQDAGNEPVETGDGSNGEENKEQISEESLNIVYDESVFMTSGLNGSVHIWDRRMTQSPALSLERGAGVPPWCLSACWGVDGDHVYAGRRNACVEQFDLKMPSKPIHNLKLPSISGPVSCVKAMPNNKHLLCASRDNIRLYNVEIAVDASNSTTKSSKVPFLIVPGHHGGIISNLYLDPTSRFIISTSGNRGWQGNSTDTTLIYDIDLE</sequence>